<proteinExistence type="evidence at protein level"/>
<gene>
    <name evidence="3" type="primary">UXNAcS</name>
    <name evidence="5" type="ordered locus">Bcer98_0430</name>
</gene>
<evidence type="ECO:0000250" key="1">
    <source>
        <dbReference type="UniProtKB" id="Q8NBZ7"/>
    </source>
</evidence>
<evidence type="ECO:0000269" key="2">
    <source>
    </source>
</evidence>
<evidence type="ECO:0000303" key="3">
    <source>
    </source>
</evidence>
<evidence type="ECO:0000305" key="4"/>
<evidence type="ECO:0000312" key="5">
    <source>
        <dbReference type="EMBL" id="ABS20785.1"/>
    </source>
</evidence>
<evidence type="ECO:0000312" key="6">
    <source>
        <dbReference type="EMBL" id="ADE43880.1"/>
    </source>
</evidence>
<dbReference type="EC" id="4.1.1.128" evidence="2"/>
<dbReference type="EMBL" id="CP000764">
    <property type="protein sequence ID" value="ABS20785.1"/>
    <property type="molecule type" value="Genomic_DNA"/>
</dbReference>
<dbReference type="EMBL" id="GU784843">
    <property type="protein sequence ID" value="ADE43880.1"/>
    <property type="molecule type" value="Genomic_DNA"/>
</dbReference>
<dbReference type="RefSeq" id="WP_011983542.1">
    <property type="nucleotide sequence ID" value="NC_009674.1"/>
</dbReference>
<dbReference type="STRING" id="315749.Bcer98_0430"/>
<dbReference type="GeneID" id="33895778"/>
<dbReference type="KEGG" id="bcy:Bcer98_0430"/>
<dbReference type="eggNOG" id="COG0451">
    <property type="taxonomic scope" value="Bacteria"/>
</dbReference>
<dbReference type="HOGENOM" id="CLU_007383_4_0_9"/>
<dbReference type="OrthoDB" id="9811743at2"/>
<dbReference type="BRENDA" id="4.1.1.B4">
    <property type="organism ID" value="15080"/>
</dbReference>
<dbReference type="Proteomes" id="UP000002300">
    <property type="component" value="Chromosome"/>
</dbReference>
<dbReference type="GO" id="GO:0005737">
    <property type="term" value="C:cytoplasm"/>
    <property type="evidence" value="ECO:0007669"/>
    <property type="project" value="TreeGrafter"/>
</dbReference>
<dbReference type="GO" id="GO:0070403">
    <property type="term" value="F:NAD+ binding"/>
    <property type="evidence" value="ECO:0007669"/>
    <property type="project" value="InterPro"/>
</dbReference>
<dbReference type="GO" id="GO:0048040">
    <property type="term" value="F:UDP-glucuronate decarboxylase activity"/>
    <property type="evidence" value="ECO:0007669"/>
    <property type="project" value="TreeGrafter"/>
</dbReference>
<dbReference type="GO" id="GO:0042732">
    <property type="term" value="P:D-xylose metabolic process"/>
    <property type="evidence" value="ECO:0007669"/>
    <property type="project" value="InterPro"/>
</dbReference>
<dbReference type="Gene3D" id="3.40.50.720">
    <property type="entry name" value="NAD(P)-binding Rossmann-like Domain"/>
    <property type="match status" value="1"/>
</dbReference>
<dbReference type="InterPro" id="IPR001509">
    <property type="entry name" value="Epimerase_deHydtase"/>
</dbReference>
<dbReference type="InterPro" id="IPR036291">
    <property type="entry name" value="NAD(P)-bd_dom_sf"/>
</dbReference>
<dbReference type="InterPro" id="IPR044516">
    <property type="entry name" value="UXS-like"/>
</dbReference>
<dbReference type="PANTHER" id="PTHR43078:SF6">
    <property type="entry name" value="UDP-GLUCURONIC ACID DECARBOXYLASE 1"/>
    <property type="match status" value="1"/>
</dbReference>
<dbReference type="PANTHER" id="PTHR43078">
    <property type="entry name" value="UDP-GLUCURONIC ACID DECARBOXYLASE-RELATED"/>
    <property type="match status" value="1"/>
</dbReference>
<dbReference type="Pfam" id="PF01370">
    <property type="entry name" value="Epimerase"/>
    <property type="match status" value="1"/>
</dbReference>
<dbReference type="SUPFAM" id="SSF51735">
    <property type="entry name" value="NAD(P)-binding Rossmann-fold domains"/>
    <property type="match status" value="1"/>
</dbReference>
<reference evidence="5" key="1">
    <citation type="journal article" date="2008" name="Chem. Biol. Interact.">
        <title>Extending the Bacillus cereus group genomics to putative food-borne pathogens of different toxicity.</title>
        <authorList>
            <person name="Lapidus A."/>
            <person name="Goltsman E."/>
            <person name="Auger S."/>
            <person name="Galleron N."/>
            <person name="Segurens B."/>
            <person name="Dossat C."/>
            <person name="Land M.L."/>
            <person name="Broussolle V."/>
            <person name="Brillard J."/>
            <person name="Guinebretiere M.-H."/>
            <person name="Sanchis V."/>
            <person name="Nguen-the C."/>
            <person name="Lereclus D."/>
            <person name="Richardson P."/>
            <person name="Wincker P."/>
            <person name="Weissenbach J."/>
            <person name="Ehrlich S.D."/>
            <person name="Sorokin A."/>
        </authorList>
    </citation>
    <scope>NUCLEOTIDE SEQUENCE [LARGE SCALE GENOMIC DNA]</scope>
    <source>
        <strain>DSM 22905 / CIP 110041 / 391-98 / NVH 391-98</strain>
    </source>
</reference>
<reference evidence="6" key="2">
    <citation type="journal article" date="2010" name="J. Biol. Chem.">
        <title>Biosynthesis of a new UDP-sugar, UDP-2-acetamido-2-deoxyxylose, in the human pathogen Bacillus cereus subspecies cytotoxis NVH 391-98.</title>
        <authorList>
            <person name="Gu X."/>
            <person name="Glushka J."/>
            <person name="Lee S.G."/>
            <person name="Bar-Peled M."/>
        </authorList>
    </citation>
    <scope>NUCLEOTIDE SEQUENCE [GENOMIC DNA]</scope>
    <scope>FUNCTION</scope>
    <scope>CATALYTIC ACTIVITY</scope>
    <scope>COFACTOR</scope>
    <scope>ACTIVITY REGULATION</scope>
    <scope>BIOPHYSICOCHEMICAL PROPERTIES</scope>
    <scope>SUBUNIT</scope>
    <source>
        <strain>DSM 22905 / CIP 110041 / 391-98 / NVH 391-98</strain>
    </source>
</reference>
<accession>A7GKX7</accession>
<comment type="function">
    <text evidence="2">Decarboxylase involved in the biosynthesis of the nucleotide-sugar UDP-N-acetylxylosamine (UDP-XylNAc) (PubMed:20529859). Catalyzes the NAD-dependent decarboxylation of UDP-N-acetylglucosaminuronic acid (UDP-GlcNAcA) to UDP-XylNAc (PubMed:20529859). Cannot use other UDP-uronates, such as UDP-glucuronic acid (UDP-GlcA) and UDP-galacturonic acid (UDP-GalA) (PubMed:20529859).</text>
</comment>
<comment type="catalytic activity">
    <reaction evidence="2">
        <text>UDP-2-acetamido-2-deoxy-alpha-D-glucuronate + H(+) = UDP-N-acetyl-alpha-D-xylosamine + CO2</text>
        <dbReference type="Rhea" id="RHEA:81487"/>
        <dbReference type="ChEBI" id="CHEBI:15378"/>
        <dbReference type="ChEBI" id="CHEBI:16526"/>
        <dbReference type="ChEBI" id="CHEBI:65040"/>
        <dbReference type="ChEBI" id="CHEBI:231888"/>
        <dbReference type="EC" id="4.1.1.128"/>
    </reaction>
    <physiologicalReaction direction="left-to-right" evidence="2">
        <dbReference type="Rhea" id="RHEA:81488"/>
    </physiologicalReaction>
</comment>
<comment type="cofactor">
    <cofactor evidence="2">
        <name>NAD(+)</name>
        <dbReference type="ChEBI" id="CHEBI:57540"/>
    </cofactor>
    <text evidence="2">Cannot use NADP(+) instead of NAD(+).</text>
</comment>
<comment type="activity regulation">
    <text evidence="2">Activity is completely inhibited by NADH but not by NADPH.</text>
</comment>
<comment type="biophysicochemical properties">
    <kinetics>
        <KM evidence="2">67 uM for UDP-GlcNAcA</KM>
        <text evidence="2">kcat is 0.47 sec(-1).</text>
    </kinetics>
    <phDependence>
        <text evidence="2">Optimum pH is 8.2 (PubMed:20529859). No activity is observed below pH 4 (PubMed:20529859).</text>
    </phDependence>
    <temperatureDependence>
        <text evidence="2">Optimum temperature is 37 degrees Celsius.</text>
    </temperatureDependence>
</comment>
<comment type="subunit">
    <text evidence="2">Homodimer.</text>
</comment>
<comment type="similarity">
    <text evidence="4">Belongs to the NAD(P)-dependent epimerase/dehydratase family.</text>
</comment>
<organism>
    <name type="scientific">Bacillus cytotoxicus (strain DSM 22905 / CIP 110041 / 391-98 / NVH 391-98)</name>
    <dbReference type="NCBI Taxonomy" id="315749"/>
    <lineage>
        <taxon>Bacteria</taxon>
        <taxon>Bacillati</taxon>
        <taxon>Bacillota</taxon>
        <taxon>Bacilli</taxon>
        <taxon>Bacillales</taxon>
        <taxon>Bacillaceae</taxon>
        <taxon>Bacillus</taxon>
        <taxon>Bacillus cereus group</taxon>
    </lineage>
</organism>
<name>UXNAS_BACCN</name>
<protein>
    <recommendedName>
        <fullName evidence="4">UDP-N-acetyl-alpha-D-glucosaminuronate decarboxylase</fullName>
        <shortName evidence="3">UDP-GlcNAcA decarboxylase</shortName>
        <ecNumber evidence="2">4.1.1.128</ecNumber>
    </recommendedName>
    <alternativeName>
        <fullName evidence="3">UDP-XylNAc synthase</fullName>
    </alternativeName>
</protein>
<keyword id="KW-0119">Carbohydrate metabolism</keyword>
<keyword id="KW-0210">Decarboxylase</keyword>
<keyword id="KW-0456">Lyase</keyword>
<keyword id="KW-0520">NAD</keyword>
<feature type="chain" id="PRO_0000461821" description="UDP-N-acetyl-alpha-D-glucosaminuronate decarboxylase">
    <location>
        <begin position="1"/>
        <end position="321"/>
    </location>
</feature>
<feature type="active site" description="Proton acceptor" evidence="1">
    <location>
        <position position="148"/>
    </location>
</feature>
<feature type="binding site" evidence="1">
    <location>
        <position position="12"/>
    </location>
    <ligand>
        <name>NAD(+)</name>
        <dbReference type="ChEBI" id="CHEBI:57540"/>
    </ligand>
</feature>
<feature type="binding site" evidence="1">
    <location>
        <position position="13"/>
    </location>
    <ligand>
        <name>NAD(+)</name>
        <dbReference type="ChEBI" id="CHEBI:57540"/>
    </ligand>
</feature>
<feature type="binding site" evidence="1">
    <location>
        <position position="14"/>
    </location>
    <ligand>
        <name>NAD(+)</name>
        <dbReference type="ChEBI" id="CHEBI:57540"/>
    </ligand>
</feature>
<feature type="binding site" evidence="1">
    <location>
        <position position="33"/>
    </location>
    <ligand>
        <name>NAD(+)</name>
        <dbReference type="ChEBI" id="CHEBI:57540"/>
    </ligand>
</feature>
<feature type="binding site" evidence="1">
    <location>
        <position position="34"/>
    </location>
    <ligand>
        <name>NAD(+)</name>
        <dbReference type="ChEBI" id="CHEBI:57540"/>
    </ligand>
</feature>
<feature type="binding site" evidence="1">
    <location>
        <position position="36"/>
    </location>
    <ligand>
        <name>NAD(+)</name>
        <dbReference type="ChEBI" id="CHEBI:57540"/>
    </ligand>
</feature>
<feature type="binding site" evidence="1">
    <location>
        <position position="38"/>
    </location>
    <ligand>
        <name>NAD(+)</name>
        <dbReference type="ChEBI" id="CHEBI:57540"/>
    </ligand>
</feature>
<feature type="binding site" evidence="1">
    <location>
        <position position="76"/>
    </location>
    <ligand>
        <name>NAD(+)</name>
        <dbReference type="ChEBI" id="CHEBI:57540"/>
    </ligand>
</feature>
<feature type="binding site" evidence="1">
    <location>
        <position position="95"/>
    </location>
    <ligand>
        <name>NAD(+)</name>
        <dbReference type="ChEBI" id="CHEBI:57540"/>
    </ligand>
</feature>
<feature type="binding site" evidence="1">
    <location>
        <position position="117"/>
    </location>
    <ligand>
        <name>NAD(+)</name>
        <dbReference type="ChEBI" id="CHEBI:57540"/>
    </ligand>
</feature>
<feature type="binding site" evidence="1">
    <location>
        <position position="148"/>
    </location>
    <ligand>
        <name>NAD(+)</name>
        <dbReference type="ChEBI" id="CHEBI:57540"/>
    </ligand>
</feature>
<feature type="binding site" evidence="1">
    <location>
        <position position="152"/>
    </location>
    <ligand>
        <name>NAD(+)</name>
        <dbReference type="ChEBI" id="CHEBI:57540"/>
    </ligand>
</feature>
<sequence>MKKRCLITGGAGFIGSHLAEELVKRGHPVTIVDNFYKGKSKYHEELTGNIPIIPISILDKNSMHELVNQHDVVFHLAAILGVKTTMEKSIELIETNFDGTRNILQAALKGKKKVIFASTSEVYGKGTPPFSEDDDRLYGATSKIRWSYAICKTLEETLCLGYALQGLPVTIVRYFNIYGPRAKDGPYAGVIPRFIRAALQGDDLLVYGDGKQTRCFTYVSDAVEATIAAMDEKVNGEIINIGSEDEKSIQEVAQDIHQLTHSSSKIVHVPFEKVYPHGFEEIPNRKPDVTKLKEMCQFHPNVSWEQGLKETIQWFREIEND</sequence>